<sequence length="692" mass="76354">MAREFSLENTRNIGIMAHIDAGKTTATERILYYTGRIHKIGETHEGASQMDWMEQEQERGITITSAATTAQWKGHRVNIIDTPGHVDFTVEVERSLRVLDGAVAVLDAQSGVEPQTETVWRQATTYGVPRIVFVNKMDKIGADFLYSVGTIHDRLQANAHPIQLPIGAEDEFNGIIDLVEECAYMYGNDLGTDIQRVEIPEEHKELAEEYRGKLIEAVAELDEEMMMKYLEGEEITVEELKAGIRKATTSVEFFPVICGSAFKNKGVQILLDAVIDYLPSPLDVPAIKGTLPDTDEEVERKSSDEEPFSALAFKIMTDPYVGKLTFFRVYSGVLNSGSYVKNSTKGKRERVGRILQMHANSREEISTVYAGDIAAAVGLKDTTTGDTLCDEKSLVILESMEFPEPVISVAIEPKSKADQDKMGTALSKLSEEDPTFRAHTDQETGQTIIAGMGELHLDIIVDRMRREFKVEANVGAPQVAYRETFRAAAKVEGKFARQSGGRGQFGHVWIEFEPNEEGKGFEFENKIVGGVVPREYIPAVGAGLEDALKNGVLAGYPVVDIKAALVDGSYHDVDSSEMAFKIAASMALKAAVSKCNPVILEPMMKVEVVIPEEYMGDIMGDVTSRRGRVEGMEARGNAQVVRAMVPLSEMFGYATSLRSNTQGRGTFSMVFDHYEEVPKSVSEEIIKKNKGE</sequence>
<comment type="function">
    <text evidence="1">Catalyzes the GTP-dependent ribosomal translocation step during translation elongation. During this step, the ribosome changes from the pre-translocational (PRE) to the post-translocational (POST) state as the newly formed A-site-bound peptidyl-tRNA and P-site-bound deacylated tRNA move to the P and E sites, respectively. Catalyzes the coordinated movement of the two tRNA molecules, the mRNA and conformational changes in the ribosome.</text>
</comment>
<comment type="subcellular location">
    <subcellularLocation>
        <location evidence="1">Cytoplasm</location>
    </subcellularLocation>
</comment>
<comment type="similarity">
    <text evidence="1">Belongs to the TRAFAC class translation factor GTPase superfamily. Classic translation factor GTPase family. EF-G/EF-2 subfamily.</text>
</comment>
<keyword id="KW-0963">Cytoplasm</keyword>
<keyword id="KW-0251">Elongation factor</keyword>
<keyword id="KW-0342">GTP-binding</keyword>
<keyword id="KW-0547">Nucleotide-binding</keyword>
<keyword id="KW-0648">Protein biosynthesis</keyword>
<proteinExistence type="inferred from homology"/>
<organism>
    <name type="scientific">Bacillus cereus (strain ZK / E33L)</name>
    <dbReference type="NCBI Taxonomy" id="288681"/>
    <lineage>
        <taxon>Bacteria</taxon>
        <taxon>Bacillati</taxon>
        <taxon>Bacillota</taxon>
        <taxon>Bacilli</taxon>
        <taxon>Bacillales</taxon>
        <taxon>Bacillaceae</taxon>
        <taxon>Bacillus</taxon>
        <taxon>Bacillus cereus group</taxon>
    </lineage>
</organism>
<reference key="1">
    <citation type="journal article" date="2006" name="J. Bacteriol.">
        <title>Pathogenomic sequence analysis of Bacillus cereus and Bacillus thuringiensis isolates closely related to Bacillus anthracis.</title>
        <authorList>
            <person name="Han C.S."/>
            <person name="Xie G."/>
            <person name="Challacombe J.F."/>
            <person name="Altherr M.R."/>
            <person name="Bhotika S.S."/>
            <person name="Bruce D."/>
            <person name="Campbell C.S."/>
            <person name="Campbell M.L."/>
            <person name="Chen J."/>
            <person name="Chertkov O."/>
            <person name="Cleland C."/>
            <person name="Dimitrijevic M."/>
            <person name="Doggett N.A."/>
            <person name="Fawcett J.J."/>
            <person name="Glavina T."/>
            <person name="Goodwin L.A."/>
            <person name="Hill K.K."/>
            <person name="Hitchcock P."/>
            <person name="Jackson P.J."/>
            <person name="Keim P."/>
            <person name="Kewalramani A.R."/>
            <person name="Longmire J."/>
            <person name="Lucas S."/>
            <person name="Malfatti S."/>
            <person name="McMurry K."/>
            <person name="Meincke L.J."/>
            <person name="Misra M."/>
            <person name="Moseman B.L."/>
            <person name="Mundt M."/>
            <person name="Munk A.C."/>
            <person name="Okinaka R.T."/>
            <person name="Parson-Quintana B."/>
            <person name="Reilly L.P."/>
            <person name="Richardson P."/>
            <person name="Robinson D.L."/>
            <person name="Rubin E."/>
            <person name="Saunders E."/>
            <person name="Tapia R."/>
            <person name="Tesmer J.G."/>
            <person name="Thayer N."/>
            <person name="Thompson L.S."/>
            <person name="Tice H."/>
            <person name="Ticknor L.O."/>
            <person name="Wills P.L."/>
            <person name="Brettin T.S."/>
            <person name="Gilna P."/>
        </authorList>
    </citation>
    <scope>NUCLEOTIDE SEQUENCE [LARGE SCALE GENOMIC DNA]</scope>
    <source>
        <strain>ZK / E33L</strain>
    </source>
</reference>
<feature type="chain" id="PRO_0000091064" description="Elongation factor G">
    <location>
        <begin position="1"/>
        <end position="692"/>
    </location>
</feature>
<feature type="domain" description="tr-type G">
    <location>
        <begin position="8"/>
        <end position="282"/>
    </location>
</feature>
<feature type="binding site" evidence="1">
    <location>
        <begin position="17"/>
        <end position="24"/>
    </location>
    <ligand>
        <name>GTP</name>
        <dbReference type="ChEBI" id="CHEBI:37565"/>
    </ligand>
</feature>
<feature type="binding site" evidence="1">
    <location>
        <begin position="81"/>
        <end position="85"/>
    </location>
    <ligand>
        <name>GTP</name>
        <dbReference type="ChEBI" id="CHEBI:37565"/>
    </ligand>
</feature>
<feature type="binding site" evidence="1">
    <location>
        <begin position="135"/>
        <end position="138"/>
    </location>
    <ligand>
        <name>GTP</name>
        <dbReference type="ChEBI" id="CHEBI:37565"/>
    </ligand>
</feature>
<name>EFG_BACCZ</name>
<accession>Q63H93</accession>
<protein>
    <recommendedName>
        <fullName evidence="1">Elongation factor G</fullName>
        <shortName evidence="1">EF-G</shortName>
    </recommendedName>
</protein>
<evidence type="ECO:0000255" key="1">
    <source>
        <dbReference type="HAMAP-Rule" id="MF_00054"/>
    </source>
</evidence>
<dbReference type="EMBL" id="CP000001">
    <property type="protein sequence ID" value="AAU20130.1"/>
    <property type="molecule type" value="Genomic_DNA"/>
</dbReference>
<dbReference type="RefSeq" id="WP_000090372.1">
    <property type="nucleotide sequence ID" value="NZ_CP009968.1"/>
</dbReference>
<dbReference type="SMR" id="Q63H93"/>
<dbReference type="KEGG" id="bcz:BCE33L0101"/>
<dbReference type="PATRIC" id="fig|288681.22.peg.50"/>
<dbReference type="Proteomes" id="UP000002612">
    <property type="component" value="Chromosome"/>
</dbReference>
<dbReference type="GO" id="GO:0005737">
    <property type="term" value="C:cytoplasm"/>
    <property type="evidence" value="ECO:0007669"/>
    <property type="project" value="UniProtKB-SubCell"/>
</dbReference>
<dbReference type="GO" id="GO:0005525">
    <property type="term" value="F:GTP binding"/>
    <property type="evidence" value="ECO:0007669"/>
    <property type="project" value="UniProtKB-UniRule"/>
</dbReference>
<dbReference type="GO" id="GO:0003924">
    <property type="term" value="F:GTPase activity"/>
    <property type="evidence" value="ECO:0007669"/>
    <property type="project" value="InterPro"/>
</dbReference>
<dbReference type="GO" id="GO:0003746">
    <property type="term" value="F:translation elongation factor activity"/>
    <property type="evidence" value="ECO:0007669"/>
    <property type="project" value="UniProtKB-UniRule"/>
</dbReference>
<dbReference type="GO" id="GO:0032790">
    <property type="term" value="P:ribosome disassembly"/>
    <property type="evidence" value="ECO:0007669"/>
    <property type="project" value="TreeGrafter"/>
</dbReference>
<dbReference type="CDD" id="cd01886">
    <property type="entry name" value="EF-G"/>
    <property type="match status" value="1"/>
</dbReference>
<dbReference type="CDD" id="cd16262">
    <property type="entry name" value="EFG_III"/>
    <property type="match status" value="1"/>
</dbReference>
<dbReference type="CDD" id="cd01434">
    <property type="entry name" value="EFG_mtEFG1_IV"/>
    <property type="match status" value="1"/>
</dbReference>
<dbReference type="CDD" id="cd03713">
    <property type="entry name" value="EFG_mtEFG_C"/>
    <property type="match status" value="1"/>
</dbReference>
<dbReference type="CDD" id="cd04088">
    <property type="entry name" value="EFG_mtEFG_II"/>
    <property type="match status" value="1"/>
</dbReference>
<dbReference type="FunFam" id="2.40.30.10:FF:000006">
    <property type="entry name" value="Elongation factor G"/>
    <property type="match status" value="1"/>
</dbReference>
<dbReference type="FunFam" id="3.30.230.10:FF:000003">
    <property type="entry name" value="Elongation factor G"/>
    <property type="match status" value="1"/>
</dbReference>
<dbReference type="FunFam" id="3.30.70.240:FF:000001">
    <property type="entry name" value="Elongation factor G"/>
    <property type="match status" value="1"/>
</dbReference>
<dbReference type="FunFam" id="3.30.70.870:FF:000001">
    <property type="entry name" value="Elongation factor G"/>
    <property type="match status" value="1"/>
</dbReference>
<dbReference type="FunFam" id="3.40.50.300:FF:000029">
    <property type="entry name" value="Elongation factor G"/>
    <property type="match status" value="1"/>
</dbReference>
<dbReference type="Gene3D" id="3.30.230.10">
    <property type="match status" value="1"/>
</dbReference>
<dbReference type="Gene3D" id="3.30.70.240">
    <property type="match status" value="1"/>
</dbReference>
<dbReference type="Gene3D" id="3.30.70.870">
    <property type="entry name" value="Elongation Factor G (Translational Gtpase), domain 3"/>
    <property type="match status" value="1"/>
</dbReference>
<dbReference type="Gene3D" id="3.40.50.300">
    <property type="entry name" value="P-loop containing nucleotide triphosphate hydrolases"/>
    <property type="match status" value="1"/>
</dbReference>
<dbReference type="Gene3D" id="2.40.30.10">
    <property type="entry name" value="Translation factors"/>
    <property type="match status" value="1"/>
</dbReference>
<dbReference type="HAMAP" id="MF_00054_B">
    <property type="entry name" value="EF_G_EF_2_B"/>
    <property type="match status" value="1"/>
</dbReference>
<dbReference type="InterPro" id="IPR041095">
    <property type="entry name" value="EFG_II"/>
</dbReference>
<dbReference type="InterPro" id="IPR009022">
    <property type="entry name" value="EFG_III"/>
</dbReference>
<dbReference type="InterPro" id="IPR035647">
    <property type="entry name" value="EFG_III/V"/>
</dbReference>
<dbReference type="InterPro" id="IPR047872">
    <property type="entry name" value="EFG_IV"/>
</dbReference>
<dbReference type="InterPro" id="IPR035649">
    <property type="entry name" value="EFG_V"/>
</dbReference>
<dbReference type="InterPro" id="IPR000640">
    <property type="entry name" value="EFG_V-like"/>
</dbReference>
<dbReference type="InterPro" id="IPR004161">
    <property type="entry name" value="EFTu-like_2"/>
</dbReference>
<dbReference type="InterPro" id="IPR031157">
    <property type="entry name" value="G_TR_CS"/>
</dbReference>
<dbReference type="InterPro" id="IPR027417">
    <property type="entry name" value="P-loop_NTPase"/>
</dbReference>
<dbReference type="InterPro" id="IPR020568">
    <property type="entry name" value="Ribosomal_Su5_D2-typ_SF"/>
</dbReference>
<dbReference type="InterPro" id="IPR014721">
    <property type="entry name" value="Ribsml_uS5_D2-typ_fold_subgr"/>
</dbReference>
<dbReference type="InterPro" id="IPR005225">
    <property type="entry name" value="Small_GTP-bd"/>
</dbReference>
<dbReference type="InterPro" id="IPR000795">
    <property type="entry name" value="T_Tr_GTP-bd_dom"/>
</dbReference>
<dbReference type="InterPro" id="IPR009000">
    <property type="entry name" value="Transl_B-barrel_sf"/>
</dbReference>
<dbReference type="InterPro" id="IPR004540">
    <property type="entry name" value="Transl_elong_EFG/EF2"/>
</dbReference>
<dbReference type="InterPro" id="IPR005517">
    <property type="entry name" value="Transl_elong_EFG/EF2_IV"/>
</dbReference>
<dbReference type="NCBIfam" id="TIGR00484">
    <property type="entry name" value="EF-G"/>
    <property type="match status" value="1"/>
</dbReference>
<dbReference type="NCBIfam" id="NF009379">
    <property type="entry name" value="PRK12740.1-3"/>
    <property type="match status" value="1"/>
</dbReference>
<dbReference type="NCBIfam" id="NF009381">
    <property type="entry name" value="PRK12740.1-5"/>
    <property type="match status" value="1"/>
</dbReference>
<dbReference type="NCBIfam" id="NF009891">
    <property type="entry name" value="PRK13351.1-1"/>
    <property type="match status" value="1"/>
</dbReference>
<dbReference type="NCBIfam" id="TIGR00231">
    <property type="entry name" value="small_GTP"/>
    <property type="match status" value="1"/>
</dbReference>
<dbReference type="PANTHER" id="PTHR43261:SF1">
    <property type="entry name" value="RIBOSOME-RELEASING FACTOR 2, MITOCHONDRIAL"/>
    <property type="match status" value="1"/>
</dbReference>
<dbReference type="PANTHER" id="PTHR43261">
    <property type="entry name" value="TRANSLATION ELONGATION FACTOR G-RELATED"/>
    <property type="match status" value="1"/>
</dbReference>
<dbReference type="Pfam" id="PF00679">
    <property type="entry name" value="EFG_C"/>
    <property type="match status" value="1"/>
</dbReference>
<dbReference type="Pfam" id="PF14492">
    <property type="entry name" value="EFG_III"/>
    <property type="match status" value="1"/>
</dbReference>
<dbReference type="Pfam" id="PF03764">
    <property type="entry name" value="EFG_IV"/>
    <property type="match status" value="1"/>
</dbReference>
<dbReference type="Pfam" id="PF00009">
    <property type="entry name" value="GTP_EFTU"/>
    <property type="match status" value="1"/>
</dbReference>
<dbReference type="Pfam" id="PF03144">
    <property type="entry name" value="GTP_EFTU_D2"/>
    <property type="match status" value="1"/>
</dbReference>
<dbReference type="PRINTS" id="PR00315">
    <property type="entry name" value="ELONGATNFCT"/>
</dbReference>
<dbReference type="SMART" id="SM00838">
    <property type="entry name" value="EFG_C"/>
    <property type="match status" value="1"/>
</dbReference>
<dbReference type="SMART" id="SM00889">
    <property type="entry name" value="EFG_IV"/>
    <property type="match status" value="1"/>
</dbReference>
<dbReference type="SUPFAM" id="SSF54980">
    <property type="entry name" value="EF-G C-terminal domain-like"/>
    <property type="match status" value="2"/>
</dbReference>
<dbReference type="SUPFAM" id="SSF52540">
    <property type="entry name" value="P-loop containing nucleoside triphosphate hydrolases"/>
    <property type="match status" value="1"/>
</dbReference>
<dbReference type="SUPFAM" id="SSF54211">
    <property type="entry name" value="Ribosomal protein S5 domain 2-like"/>
    <property type="match status" value="1"/>
</dbReference>
<dbReference type="SUPFAM" id="SSF50447">
    <property type="entry name" value="Translation proteins"/>
    <property type="match status" value="1"/>
</dbReference>
<dbReference type="PROSITE" id="PS00301">
    <property type="entry name" value="G_TR_1"/>
    <property type="match status" value="1"/>
</dbReference>
<dbReference type="PROSITE" id="PS51722">
    <property type="entry name" value="G_TR_2"/>
    <property type="match status" value="1"/>
</dbReference>
<gene>
    <name evidence="1" type="primary">fusA</name>
    <name type="ordered locus">BCE33L0101</name>
</gene>